<organism>
    <name type="scientific">Burkholderia cenocepacia (strain HI2424)</name>
    <dbReference type="NCBI Taxonomy" id="331272"/>
    <lineage>
        <taxon>Bacteria</taxon>
        <taxon>Pseudomonadati</taxon>
        <taxon>Pseudomonadota</taxon>
        <taxon>Betaproteobacteria</taxon>
        <taxon>Burkholderiales</taxon>
        <taxon>Burkholderiaceae</taxon>
        <taxon>Burkholderia</taxon>
        <taxon>Burkholderia cepacia complex</taxon>
    </lineage>
</organism>
<comment type="function">
    <text evidence="1">Part of the ABC transporter complex SsuABC involved in aliphatic sulfonates import. Responsible for energy coupling to the transport system.</text>
</comment>
<comment type="catalytic activity">
    <reaction evidence="1">
        <text>ATP + H2O + aliphatic sulfonate-[sulfonate-binding protein]Side 1 = ADP + phosphate + aliphatic sulfonateSide 2 + [sulfonate-binding protein]Side 1.</text>
        <dbReference type="EC" id="7.6.2.14"/>
    </reaction>
</comment>
<comment type="subunit">
    <text evidence="1">The complex is composed of two ATP-binding proteins (SsuB), two transmembrane proteins (SsuC) and a solute-binding protein (SsuA).</text>
</comment>
<comment type="subcellular location">
    <subcellularLocation>
        <location evidence="1">Cell inner membrane</location>
        <topology evidence="1">Peripheral membrane protein</topology>
    </subcellularLocation>
</comment>
<comment type="similarity">
    <text evidence="1">Belongs to the ABC transporter superfamily. Aliphatic sulfonates importer (TC 3.A.1.17.2) family.</text>
</comment>
<reference key="1">
    <citation type="submission" date="2006-08" db="EMBL/GenBank/DDBJ databases">
        <title>Complete sequence of chromosome 1 of Burkholderia cenocepacia HI2424.</title>
        <authorList>
            <person name="Copeland A."/>
            <person name="Lucas S."/>
            <person name="Lapidus A."/>
            <person name="Barry K."/>
            <person name="Detter J.C."/>
            <person name="Glavina del Rio T."/>
            <person name="Hammon N."/>
            <person name="Israni S."/>
            <person name="Pitluck S."/>
            <person name="Chain P."/>
            <person name="Malfatti S."/>
            <person name="Shin M."/>
            <person name="Vergez L."/>
            <person name="Schmutz J."/>
            <person name="Larimer F."/>
            <person name="Land M."/>
            <person name="Hauser L."/>
            <person name="Kyrpides N."/>
            <person name="Kim E."/>
            <person name="LiPuma J.J."/>
            <person name="Gonzalez C.F."/>
            <person name="Konstantinidis K."/>
            <person name="Tiedje J.M."/>
            <person name="Richardson P."/>
        </authorList>
    </citation>
    <scope>NUCLEOTIDE SEQUENCE [LARGE SCALE GENOMIC DNA]</scope>
    <source>
        <strain>HI2424</strain>
    </source>
</reference>
<gene>
    <name evidence="1" type="primary">ssuB1</name>
    <name type="ordered locus">Bcen2424_1564</name>
</gene>
<name>SSUB1_BURCH</name>
<feature type="chain" id="PRO_0000279897" description="Aliphatic sulfonates import ATP-binding protein SsuB 1">
    <location>
        <begin position="1"/>
        <end position="319"/>
    </location>
</feature>
<feature type="domain" description="ABC transporter" evidence="1">
    <location>
        <begin position="63"/>
        <end position="282"/>
    </location>
</feature>
<feature type="binding site" evidence="1">
    <location>
        <begin position="95"/>
        <end position="102"/>
    </location>
    <ligand>
        <name>ATP</name>
        <dbReference type="ChEBI" id="CHEBI:30616"/>
    </ligand>
</feature>
<accession>A0K739</accession>
<dbReference type="EC" id="7.6.2.14" evidence="1"/>
<dbReference type="EMBL" id="CP000458">
    <property type="protein sequence ID" value="ABK08316.1"/>
    <property type="molecule type" value="Genomic_DNA"/>
</dbReference>
<dbReference type="RefSeq" id="WP_011545312.1">
    <property type="nucleotide sequence ID" value="NC_008542.1"/>
</dbReference>
<dbReference type="SMR" id="A0K739"/>
<dbReference type="KEGG" id="bch:Bcen2424_1564"/>
<dbReference type="HOGENOM" id="CLU_000604_1_22_4"/>
<dbReference type="GO" id="GO:0005886">
    <property type="term" value="C:plasma membrane"/>
    <property type="evidence" value="ECO:0007669"/>
    <property type="project" value="UniProtKB-SubCell"/>
</dbReference>
<dbReference type="GO" id="GO:0005524">
    <property type="term" value="F:ATP binding"/>
    <property type="evidence" value="ECO:0007669"/>
    <property type="project" value="UniProtKB-KW"/>
</dbReference>
<dbReference type="GO" id="GO:0016887">
    <property type="term" value="F:ATP hydrolysis activity"/>
    <property type="evidence" value="ECO:0007669"/>
    <property type="project" value="InterPro"/>
</dbReference>
<dbReference type="CDD" id="cd03293">
    <property type="entry name" value="ABC_NrtD_SsuB_transporters"/>
    <property type="match status" value="1"/>
</dbReference>
<dbReference type="Gene3D" id="3.40.50.300">
    <property type="entry name" value="P-loop containing nucleotide triphosphate hydrolases"/>
    <property type="match status" value="1"/>
</dbReference>
<dbReference type="InterPro" id="IPR003593">
    <property type="entry name" value="AAA+_ATPase"/>
</dbReference>
<dbReference type="InterPro" id="IPR003439">
    <property type="entry name" value="ABC_transporter-like_ATP-bd"/>
</dbReference>
<dbReference type="InterPro" id="IPR017871">
    <property type="entry name" value="ABC_transporter-like_CS"/>
</dbReference>
<dbReference type="InterPro" id="IPR050166">
    <property type="entry name" value="ABC_transporter_ATP-bind"/>
</dbReference>
<dbReference type="InterPro" id="IPR027417">
    <property type="entry name" value="P-loop_NTPase"/>
</dbReference>
<dbReference type="PANTHER" id="PTHR42788:SF17">
    <property type="entry name" value="ALIPHATIC SULFONATES IMPORT ATP-BINDING PROTEIN SSUB"/>
    <property type="match status" value="1"/>
</dbReference>
<dbReference type="PANTHER" id="PTHR42788">
    <property type="entry name" value="TAURINE IMPORT ATP-BINDING PROTEIN-RELATED"/>
    <property type="match status" value="1"/>
</dbReference>
<dbReference type="Pfam" id="PF00005">
    <property type="entry name" value="ABC_tran"/>
    <property type="match status" value="1"/>
</dbReference>
<dbReference type="SMART" id="SM00382">
    <property type="entry name" value="AAA"/>
    <property type="match status" value="1"/>
</dbReference>
<dbReference type="SUPFAM" id="SSF52540">
    <property type="entry name" value="P-loop containing nucleoside triphosphate hydrolases"/>
    <property type="match status" value="1"/>
</dbReference>
<dbReference type="PROSITE" id="PS00211">
    <property type="entry name" value="ABC_TRANSPORTER_1"/>
    <property type="match status" value="1"/>
</dbReference>
<dbReference type="PROSITE" id="PS50893">
    <property type="entry name" value="ABC_TRANSPORTER_2"/>
    <property type="match status" value="1"/>
</dbReference>
<dbReference type="PROSITE" id="PS51291">
    <property type="entry name" value="SSUB"/>
    <property type="match status" value="1"/>
</dbReference>
<protein>
    <recommendedName>
        <fullName evidence="1">Aliphatic sulfonates import ATP-binding protein SsuB 1</fullName>
        <ecNumber evidence="1">7.6.2.14</ecNumber>
    </recommendedName>
</protein>
<evidence type="ECO:0000255" key="1">
    <source>
        <dbReference type="HAMAP-Rule" id="MF_01724"/>
    </source>
</evidence>
<sequence>MNATTSAAAYGPLAGADLEAELAQARVADSDARDAAILEHDGSASVVPLARRRTSGTAPDDAVTLSGVSKRFGARTVLDNVELGIARGSFVAIVGRSGCGKSTLLRLVAGLEQPSSGALVTRGEGGGALDTRIMYQDARLLPWKTVLQNVMLGLGRGARDQARAVLDEVGLLERANDWPAQLSGGQRQRVALARALVHRPQLLLLDEPLGALDALTRIEMHALIERLWREHRFTALLVTHDVQEAVALGDRILLIEQGRVALDQAVPLDRPRARASAAFAALEDRVLKRVLAGGPGAADHDAEHEADKVRPVGQIRWAV</sequence>
<proteinExistence type="inferred from homology"/>
<keyword id="KW-0067">ATP-binding</keyword>
<keyword id="KW-0997">Cell inner membrane</keyword>
<keyword id="KW-1003">Cell membrane</keyword>
<keyword id="KW-0472">Membrane</keyword>
<keyword id="KW-0547">Nucleotide-binding</keyword>
<keyword id="KW-1278">Translocase</keyword>
<keyword id="KW-0813">Transport</keyword>